<sequence>MALLIITTILWAFSFSFYGEYLAGHVDSYFAVLVRVGLAALVFLPFLRTRGNSLKTVGLYMLVGAMQLGVMYMLSFRAYLYLTVSELLLFTVLTPLYITLIYDIMSKRRLRWGYAFSALLAVIGAGIIRYDQVTDHFWTGLLLVQLSNITFAIGMVGYKRLMETRPMPQHNAFAWFYLGAFLVAVIAWFLLGNAQKMPQTTLQWGILVFLGVVASGIGYFMWNYGATQVDAGTLGIMNNMHVPAGLLVNLAIWHQQPHWPTFITGALVILASLWVHRKWVAPRSSQTADDRRRDCALSE</sequence>
<comment type="function">
    <text evidence="1">Uptake of biotin.</text>
</comment>
<comment type="catalytic activity">
    <reaction evidence="1">
        <text>biotin(in) = biotin(out)</text>
        <dbReference type="Rhea" id="RHEA:28458"/>
        <dbReference type="ChEBI" id="CHEBI:57586"/>
    </reaction>
    <physiologicalReaction direction="right-to-left" evidence="1">
        <dbReference type="Rhea" id="RHEA:28460"/>
    </physiologicalReaction>
</comment>
<comment type="subcellular location">
    <subcellularLocation>
        <location evidence="1">Cell inner membrane</location>
        <topology evidence="2">Multi-pass membrane protein</topology>
    </subcellularLocation>
</comment>
<comment type="similarity">
    <text evidence="3">Belongs to the drug/metabolite transporter (DMT) superfamily. 10 TMS drug/metabolite exporter (DME) (TC 2.A.7.3) family.</text>
</comment>
<name>BIOP_ECO57</name>
<reference key="1">
    <citation type="journal article" date="2001" name="Nature">
        <title>Genome sequence of enterohaemorrhagic Escherichia coli O157:H7.</title>
        <authorList>
            <person name="Perna N.T."/>
            <person name="Plunkett G. III"/>
            <person name="Burland V."/>
            <person name="Mau B."/>
            <person name="Glasner J.D."/>
            <person name="Rose D.J."/>
            <person name="Mayhew G.F."/>
            <person name="Evans P.S."/>
            <person name="Gregor J."/>
            <person name="Kirkpatrick H.A."/>
            <person name="Posfai G."/>
            <person name="Hackett J."/>
            <person name="Klink S."/>
            <person name="Boutin A."/>
            <person name="Shao Y."/>
            <person name="Miller L."/>
            <person name="Grotbeck E.J."/>
            <person name="Davis N.W."/>
            <person name="Lim A."/>
            <person name="Dimalanta E.T."/>
            <person name="Potamousis K."/>
            <person name="Apodaca J."/>
            <person name="Anantharaman T.S."/>
            <person name="Lin J."/>
            <person name="Yen G."/>
            <person name="Schwartz D.C."/>
            <person name="Welch R.A."/>
            <person name="Blattner F.R."/>
        </authorList>
    </citation>
    <scope>NUCLEOTIDE SEQUENCE [LARGE SCALE GENOMIC DNA]</scope>
    <source>
        <strain>O157:H7 / EDL933 / ATCC 700927 / EHEC</strain>
    </source>
</reference>
<reference key="2">
    <citation type="journal article" date="2001" name="DNA Res.">
        <title>Complete genome sequence of enterohemorrhagic Escherichia coli O157:H7 and genomic comparison with a laboratory strain K-12.</title>
        <authorList>
            <person name="Hayashi T."/>
            <person name="Makino K."/>
            <person name="Ohnishi M."/>
            <person name="Kurokawa K."/>
            <person name="Ishii K."/>
            <person name="Yokoyama K."/>
            <person name="Han C.-G."/>
            <person name="Ohtsubo E."/>
            <person name="Nakayama K."/>
            <person name="Murata T."/>
            <person name="Tanaka M."/>
            <person name="Tobe T."/>
            <person name="Iida T."/>
            <person name="Takami H."/>
            <person name="Honda T."/>
            <person name="Sasakawa C."/>
            <person name="Ogasawara N."/>
            <person name="Yasunaga T."/>
            <person name="Kuhara S."/>
            <person name="Shiba T."/>
            <person name="Hattori M."/>
            <person name="Shinagawa H."/>
        </authorList>
    </citation>
    <scope>NUCLEOTIDE SEQUENCE [LARGE SCALE GENOMIC DNA]</scope>
    <source>
        <strain>O157:H7 / Sakai / RIMD 0509952 / EHEC</strain>
    </source>
</reference>
<proteinExistence type="inferred from homology"/>
<protein>
    <recommendedName>
        <fullName evidence="1">Biotin transporter</fullName>
    </recommendedName>
</protein>
<organism>
    <name type="scientific">Escherichia coli O157:H7</name>
    <dbReference type="NCBI Taxonomy" id="83334"/>
    <lineage>
        <taxon>Bacteria</taxon>
        <taxon>Pseudomonadati</taxon>
        <taxon>Pseudomonadota</taxon>
        <taxon>Gammaproteobacteria</taxon>
        <taxon>Enterobacterales</taxon>
        <taxon>Enterobacteriaceae</taxon>
        <taxon>Escherichia</taxon>
    </lineage>
</organism>
<accession>P0ADP6</accession>
<accession>P27849</accession>
<accession>Q8X5G7</accession>
<dbReference type="EMBL" id="AE005174">
    <property type="protein sequence ID" value="AAG59023.1"/>
    <property type="molecule type" value="Genomic_DNA"/>
</dbReference>
<dbReference type="EMBL" id="BA000007">
    <property type="protein sequence ID" value="BAB38180.1"/>
    <property type="molecule type" value="Genomic_DNA"/>
</dbReference>
<dbReference type="PIR" id="C86070">
    <property type="entry name" value="C86070"/>
</dbReference>
<dbReference type="PIR" id="E91223">
    <property type="entry name" value="E91223"/>
</dbReference>
<dbReference type="RefSeq" id="NP_312784.1">
    <property type="nucleotide sequence ID" value="NC_002695.1"/>
</dbReference>
<dbReference type="RefSeq" id="WP_001196238.1">
    <property type="nucleotide sequence ID" value="NZ_VOAI01000017.1"/>
</dbReference>
<dbReference type="SMR" id="P0ADP6"/>
<dbReference type="STRING" id="155864.Z5348"/>
<dbReference type="GeneID" id="915147"/>
<dbReference type="GeneID" id="93778110"/>
<dbReference type="KEGG" id="ece:Z5348"/>
<dbReference type="KEGG" id="ecs:ECs_4757"/>
<dbReference type="HOGENOM" id="CLU_085269_0_0_6"/>
<dbReference type="OMA" id="HTAFSWF"/>
<dbReference type="Proteomes" id="UP000000558">
    <property type="component" value="Chromosome"/>
</dbReference>
<dbReference type="Proteomes" id="UP000002519">
    <property type="component" value="Chromosome"/>
</dbReference>
<dbReference type="GO" id="GO:0005886">
    <property type="term" value="C:plasma membrane"/>
    <property type="evidence" value="ECO:0007669"/>
    <property type="project" value="UniProtKB-SubCell"/>
</dbReference>
<dbReference type="InterPro" id="IPR004779">
    <property type="entry name" value="CO/AA/NH_transpt"/>
</dbReference>
<dbReference type="InterPro" id="IPR051258">
    <property type="entry name" value="Diverse_Substrate_Transporter"/>
</dbReference>
<dbReference type="InterPro" id="IPR000620">
    <property type="entry name" value="EamA_dom"/>
</dbReference>
<dbReference type="NCBIfam" id="TIGR00950">
    <property type="entry name" value="2A78"/>
    <property type="match status" value="1"/>
</dbReference>
<dbReference type="PANTHER" id="PTHR42920:SF11">
    <property type="entry name" value="INNER MEMBRANE PROTEIN YTFF"/>
    <property type="match status" value="1"/>
</dbReference>
<dbReference type="PANTHER" id="PTHR42920">
    <property type="entry name" value="OS03G0707200 PROTEIN-RELATED"/>
    <property type="match status" value="1"/>
</dbReference>
<dbReference type="Pfam" id="PF00892">
    <property type="entry name" value="EamA"/>
    <property type="match status" value="2"/>
</dbReference>
<dbReference type="SUPFAM" id="SSF103481">
    <property type="entry name" value="Multidrug resistance efflux transporter EmrE"/>
    <property type="match status" value="2"/>
</dbReference>
<feature type="chain" id="PRO_0000169664" description="Biotin transporter">
    <location>
        <begin position="1"/>
        <end position="299"/>
    </location>
</feature>
<feature type="transmembrane region" description="Helical" evidence="2">
    <location>
        <begin position="2"/>
        <end position="22"/>
    </location>
</feature>
<feature type="transmembrane region" description="Helical" evidence="2">
    <location>
        <begin position="26"/>
        <end position="46"/>
    </location>
</feature>
<feature type="transmembrane region" description="Helical" evidence="2">
    <location>
        <begin position="56"/>
        <end position="76"/>
    </location>
</feature>
<feature type="transmembrane region" description="Helical" evidence="2">
    <location>
        <begin position="81"/>
        <end position="101"/>
    </location>
</feature>
<feature type="transmembrane region" description="Helical" evidence="2">
    <location>
        <begin position="110"/>
        <end position="130"/>
    </location>
</feature>
<feature type="transmembrane region" description="Helical" evidence="2">
    <location>
        <begin position="137"/>
        <end position="157"/>
    </location>
</feature>
<feature type="transmembrane region" description="Helical" evidence="2">
    <location>
        <begin position="172"/>
        <end position="192"/>
    </location>
</feature>
<feature type="transmembrane region" description="Helical" evidence="2">
    <location>
        <begin position="202"/>
        <end position="222"/>
    </location>
</feature>
<feature type="transmembrane region" description="Helical" evidence="2">
    <location>
        <begin position="233"/>
        <end position="253"/>
    </location>
</feature>
<feature type="transmembrane region" description="Helical" evidence="2">
    <location>
        <begin position="256"/>
        <end position="276"/>
    </location>
</feature>
<feature type="domain" description="EamA 1" evidence="2">
    <location>
        <begin position="3"/>
        <end position="128"/>
    </location>
</feature>
<feature type="domain" description="EamA 2" evidence="2">
    <location>
        <begin position="139"/>
        <end position="274"/>
    </location>
</feature>
<keyword id="KW-0997">Cell inner membrane</keyword>
<keyword id="KW-1003">Cell membrane</keyword>
<keyword id="KW-0472">Membrane</keyword>
<keyword id="KW-1185">Reference proteome</keyword>
<keyword id="KW-0677">Repeat</keyword>
<keyword id="KW-0812">Transmembrane</keyword>
<keyword id="KW-1133">Transmembrane helix</keyword>
<keyword id="KW-0813">Transport</keyword>
<gene>
    <name evidence="1" type="primary">bioP</name>
    <name type="synonym">yigM</name>
    <name type="ordered locus">Z5348</name>
    <name type="ordered locus">ECs4757</name>
</gene>
<evidence type="ECO:0000250" key="1">
    <source>
        <dbReference type="UniProtKB" id="P0ADP5"/>
    </source>
</evidence>
<evidence type="ECO:0000255" key="2"/>
<evidence type="ECO:0000305" key="3"/>